<proteinExistence type="evidence at protein level"/>
<comment type="function">
    <text evidence="1 7 8">May act as scaffold protein (By similarity). May play a role in the development of the retina. Has been suggested to play a role in axon guidance.</text>
</comment>
<comment type="subunit">
    <text evidence="1">Binds F-actin. Interacts with ABRA (By similarity).</text>
</comment>
<comment type="interaction">
    <interactant intactId="EBI-2307994">
        <id>Q8K4G5</id>
    </interactant>
    <interactant intactId="EBI-300895">
        <id>Q62108</id>
        <label>Dlg4</label>
    </interactant>
    <organismsDiffer>false</organismsDiffer>
    <experiments>5</experiments>
</comment>
<comment type="subcellular location">
    <subcellularLocation>
        <location evidence="9">Cytoplasm</location>
    </subcellularLocation>
    <subcellularLocation>
        <location evidence="9">Cytoplasm</location>
        <location evidence="9">Cytoskeleton</location>
    </subcellularLocation>
    <text>In a striped pattern along the myofibril axis in cardiac myocytes. Associated with the cytoskeleton.</text>
</comment>
<comment type="alternative products">
    <event type="alternative splicing"/>
    <isoform>
        <id>Q8K4G5-1</id>
        <name>1</name>
        <name>AbLIM-L</name>
        <sequence type="displayed"/>
    </isoform>
    <isoform>
        <id>Q8K4G5-2</id>
        <name>2</name>
        <name>AbLIM-M</name>
        <sequence type="described" ref="VSP_012104 VSP_012108 VSP_012110"/>
    </isoform>
    <isoform>
        <id>Q8K4G5-3</id>
        <name>3</name>
        <name>AbLIM-S</name>
        <sequence type="described" ref="VSP_012103"/>
    </isoform>
    <isoform>
        <id>Q8K4G5-4</id>
        <name>4</name>
        <sequence type="described" ref="VSP_012104 VSP_012108 VSP_012110 VSP_012111"/>
    </isoform>
    <isoform>
        <id>Q8K4G5-5</id>
        <name>5</name>
        <sequence type="described" ref="VSP_012105 VSP_012106 VSP_012107 VSP_012109"/>
    </isoform>
</comment>
<comment type="tissue specificity">
    <text evidence="7 8 9">Isoform 1 is detected in adult retina, where it is highly expressed in the ganglion layer. Detected in rod inner segment. Isoform 2 is highly expressed in adult retina, brain, kidney and heart. Isoform 3 is highly expressed in adult retina, brain, kidney, liver, skeletal muscle, spleen and heart. Detected in embryonic retina, brain, spinal cord, peripheral sensory ganglia and thymus.</text>
</comment>
<comment type="developmental stage">
    <text evidence="8 9">Isoform 1 is detected at low levels starting from 12 dpc and remains constant until birth. After this levels increase strongly and expression remains high in adults. Isoform 2 and isoform 3 are expressed at a constant high level throughout development.</text>
</comment>
<comment type="miscellaneous">
    <text>Isoform 1 is not necessary for normal axon guidance.</text>
</comment>
<comment type="sequence caution" evidence="13">
    <conflict type="erroneous initiation">
        <sequence resource="EMBL-CDS" id="BAC65478"/>
    </conflict>
</comment>
<evidence type="ECO:0000250" key="1"/>
<evidence type="ECO:0000250" key="2">
    <source>
        <dbReference type="UniProtKB" id="O14639"/>
    </source>
</evidence>
<evidence type="ECO:0000255" key="3"/>
<evidence type="ECO:0000255" key="4">
    <source>
        <dbReference type="PROSITE-ProRule" id="PRU00125"/>
    </source>
</evidence>
<evidence type="ECO:0000255" key="5">
    <source>
        <dbReference type="PROSITE-ProRule" id="PRU00595"/>
    </source>
</evidence>
<evidence type="ECO:0000256" key="6">
    <source>
        <dbReference type="SAM" id="MobiDB-lite"/>
    </source>
</evidence>
<evidence type="ECO:0000269" key="7">
    <source>
    </source>
</evidence>
<evidence type="ECO:0000269" key="8">
    <source>
    </source>
</evidence>
<evidence type="ECO:0000269" key="9">
    <source>
    </source>
</evidence>
<evidence type="ECO:0000303" key="10">
    <source>
    </source>
</evidence>
<evidence type="ECO:0000303" key="11">
    <source>
    </source>
</evidence>
<evidence type="ECO:0000303" key="12">
    <source>
    </source>
</evidence>
<evidence type="ECO:0000305" key="13"/>
<evidence type="ECO:0007744" key="14">
    <source>
    </source>
</evidence>
<evidence type="ECO:0007744" key="15">
    <source>
    </source>
</evidence>
<evidence type="ECO:0007744" key="16">
    <source>
    </source>
</evidence>
<gene>
    <name type="primary">Ablim1</name>
    <name type="synonym">Ablim</name>
    <name type="synonym">Kiaa0059</name>
</gene>
<dbReference type="EMBL" id="AF404774">
    <property type="protein sequence ID" value="AAM73705.1"/>
    <property type="molecule type" value="mRNA"/>
</dbReference>
<dbReference type="EMBL" id="AF404775">
    <property type="protein sequence ID" value="AAM73706.1"/>
    <property type="molecule type" value="mRNA"/>
</dbReference>
<dbReference type="EMBL" id="AF404776">
    <property type="protein sequence ID" value="AAM73707.1"/>
    <property type="molecule type" value="mRNA"/>
</dbReference>
<dbReference type="EMBL" id="AK122196">
    <property type="protein sequence ID" value="BAC65478.1"/>
    <property type="status" value="ALT_INIT"/>
    <property type="molecule type" value="mRNA"/>
</dbReference>
<dbReference type="EMBL" id="AK029371">
    <property type="protein sequence ID" value="BAC26424.1"/>
    <property type="molecule type" value="mRNA"/>
</dbReference>
<dbReference type="CCDS" id="CCDS38027.1">
    <molecule id="Q8K4G5-1"/>
</dbReference>
<dbReference type="CCDS" id="CCDS50478.1">
    <molecule id="Q8K4G5-3"/>
</dbReference>
<dbReference type="CCDS" id="CCDS50479.1">
    <molecule id="Q8K4G5-2"/>
</dbReference>
<dbReference type="CCDS" id="CCDS70964.1">
    <molecule id="Q8K4G5-4"/>
</dbReference>
<dbReference type="RefSeq" id="NP_001096647.1">
    <molecule id="Q8K4G5-2"/>
    <property type="nucleotide sequence ID" value="NM_001103177.3"/>
</dbReference>
<dbReference type="RefSeq" id="NP_001096648.1">
    <property type="nucleotide sequence ID" value="NM_001103178.2"/>
</dbReference>
<dbReference type="RefSeq" id="NP_001277742.1">
    <property type="nucleotide sequence ID" value="NM_001290813.1"/>
</dbReference>
<dbReference type="RefSeq" id="NP_001277744.1">
    <molecule id="Q8K4G5-4"/>
    <property type="nucleotide sequence ID" value="NM_001290815.2"/>
</dbReference>
<dbReference type="RefSeq" id="NP_848803.3">
    <property type="nucleotide sequence ID" value="NM_178688.3"/>
</dbReference>
<dbReference type="SMR" id="Q8K4G5"/>
<dbReference type="BioGRID" id="230492">
    <property type="interactions" value="15"/>
</dbReference>
<dbReference type="FunCoup" id="Q8K4G5">
    <property type="interactions" value="222"/>
</dbReference>
<dbReference type="IntAct" id="Q8K4G5">
    <property type="interactions" value="6"/>
</dbReference>
<dbReference type="MINT" id="Q8K4G5"/>
<dbReference type="STRING" id="10090.ENSMUSP00000078336"/>
<dbReference type="GlyGen" id="Q8K4G5">
    <property type="glycosylation" value="9 sites, 1 O-linked glycan (8 sites)"/>
</dbReference>
<dbReference type="iPTMnet" id="Q8K4G5"/>
<dbReference type="PhosphoSitePlus" id="Q8K4G5"/>
<dbReference type="SwissPalm" id="Q8K4G5"/>
<dbReference type="jPOST" id="Q8K4G5"/>
<dbReference type="PaxDb" id="10090-ENSMUSP00000078336"/>
<dbReference type="PeptideAtlas" id="Q8K4G5"/>
<dbReference type="ProteomicsDB" id="285909">
    <molecule id="Q8K4G5-1"/>
</dbReference>
<dbReference type="ProteomicsDB" id="285910">
    <molecule id="Q8K4G5-2"/>
</dbReference>
<dbReference type="ProteomicsDB" id="285911">
    <molecule id="Q8K4G5-3"/>
</dbReference>
<dbReference type="ProteomicsDB" id="285912">
    <molecule id="Q8K4G5-4"/>
</dbReference>
<dbReference type="ProteomicsDB" id="285913">
    <molecule id="Q8K4G5-5"/>
</dbReference>
<dbReference type="Pumba" id="Q8K4G5"/>
<dbReference type="Antibodypedia" id="31944">
    <property type="antibodies" value="188 antibodies from 28 providers"/>
</dbReference>
<dbReference type="DNASU" id="226251"/>
<dbReference type="Ensembl" id="ENSMUST00000099294.9">
    <molecule id="Q8K4G5-4"/>
    <property type="protein sequence ID" value="ENSMUSP00000096897.3"/>
    <property type="gene ID" value="ENSMUSG00000025085.17"/>
</dbReference>
<dbReference type="Ensembl" id="ENSMUST00000111524.8">
    <molecule id="Q8K4G5-5"/>
    <property type="protein sequence ID" value="ENSMUSP00000107149.2"/>
    <property type="gene ID" value="ENSMUSG00000025085.17"/>
</dbReference>
<dbReference type="Ensembl" id="ENSMUST00000111546.8">
    <molecule id="Q8K4G5-2"/>
    <property type="protein sequence ID" value="ENSMUSP00000107172.2"/>
    <property type="gene ID" value="ENSMUSG00000025085.17"/>
</dbReference>
<dbReference type="GeneID" id="226251"/>
<dbReference type="KEGG" id="mmu:226251"/>
<dbReference type="UCSC" id="uc008hzz.1">
    <molecule id="Q8K4G5-5"/>
    <property type="organism name" value="mouse"/>
</dbReference>
<dbReference type="UCSC" id="uc033hkz.2">
    <molecule id="Q8K4G5-2"/>
    <property type="organism name" value="mouse"/>
</dbReference>
<dbReference type="UCSC" id="uc033hld.2">
    <molecule id="Q8K4G5-4"/>
    <property type="organism name" value="mouse"/>
</dbReference>
<dbReference type="AGR" id="MGI:1194500"/>
<dbReference type="CTD" id="3983"/>
<dbReference type="MGI" id="MGI:1194500">
    <property type="gene designation" value="Ablim1"/>
</dbReference>
<dbReference type="VEuPathDB" id="HostDB:ENSMUSG00000025085"/>
<dbReference type="eggNOG" id="KOG1044">
    <property type="taxonomic scope" value="Eukaryota"/>
</dbReference>
<dbReference type="GeneTree" id="ENSGT00950000182850"/>
<dbReference type="HOGENOM" id="CLU_001357_12_3_1"/>
<dbReference type="InParanoid" id="Q8K4G5"/>
<dbReference type="OMA" id="VENRHFH"/>
<dbReference type="OrthoDB" id="1746725at2759"/>
<dbReference type="PhylomeDB" id="Q8K4G5"/>
<dbReference type="BioGRID-ORCS" id="226251">
    <property type="hits" value="1 hit in 61 CRISPR screens"/>
</dbReference>
<dbReference type="ChiTaRS" id="Ablim1">
    <property type="organism name" value="mouse"/>
</dbReference>
<dbReference type="PRO" id="PR:Q8K4G5"/>
<dbReference type="Proteomes" id="UP000000589">
    <property type="component" value="Chromosome 19"/>
</dbReference>
<dbReference type="RNAct" id="Q8K4G5">
    <property type="molecule type" value="protein"/>
</dbReference>
<dbReference type="Bgee" id="ENSMUSG00000025085">
    <property type="expression patterns" value="Expressed in cardiac muscle of left ventricle and 272 other cell types or tissues"/>
</dbReference>
<dbReference type="ExpressionAtlas" id="Q8K4G5">
    <property type="expression patterns" value="baseline and differential"/>
</dbReference>
<dbReference type="GO" id="GO:0015629">
    <property type="term" value="C:actin cytoskeleton"/>
    <property type="evidence" value="ECO:0000314"/>
    <property type="project" value="MGI"/>
</dbReference>
<dbReference type="GO" id="GO:0005737">
    <property type="term" value="C:cytoplasm"/>
    <property type="evidence" value="ECO:0007669"/>
    <property type="project" value="UniProtKB-SubCell"/>
</dbReference>
<dbReference type="GO" id="GO:0030027">
    <property type="term" value="C:lamellipodium"/>
    <property type="evidence" value="ECO:0000266"/>
    <property type="project" value="MGI"/>
</dbReference>
<dbReference type="GO" id="GO:0014069">
    <property type="term" value="C:postsynaptic density"/>
    <property type="evidence" value="ECO:0000314"/>
    <property type="project" value="MGI"/>
</dbReference>
<dbReference type="GO" id="GO:0001725">
    <property type="term" value="C:stress fiber"/>
    <property type="evidence" value="ECO:0000266"/>
    <property type="project" value="MGI"/>
</dbReference>
<dbReference type="GO" id="GO:0003779">
    <property type="term" value="F:actin binding"/>
    <property type="evidence" value="ECO:0000314"/>
    <property type="project" value="MGI"/>
</dbReference>
<dbReference type="GO" id="GO:0046872">
    <property type="term" value="F:metal ion binding"/>
    <property type="evidence" value="ECO:0007669"/>
    <property type="project" value="UniProtKB-KW"/>
</dbReference>
<dbReference type="GO" id="GO:0007411">
    <property type="term" value="P:axon guidance"/>
    <property type="evidence" value="ECO:0000314"/>
    <property type="project" value="MGI"/>
</dbReference>
<dbReference type="GO" id="GO:0060271">
    <property type="term" value="P:cilium assembly"/>
    <property type="evidence" value="ECO:0000266"/>
    <property type="project" value="MGI"/>
</dbReference>
<dbReference type="GO" id="GO:0007010">
    <property type="term" value="P:cytoskeleton organization"/>
    <property type="evidence" value="ECO:0007669"/>
    <property type="project" value="InterPro"/>
</dbReference>
<dbReference type="GO" id="GO:0030032">
    <property type="term" value="P:lamellipodium assembly"/>
    <property type="evidence" value="ECO:0000266"/>
    <property type="project" value="MGI"/>
</dbReference>
<dbReference type="GO" id="GO:0045944">
    <property type="term" value="P:positive regulation of transcription by RNA polymerase II"/>
    <property type="evidence" value="ECO:0000315"/>
    <property type="project" value="MGI"/>
</dbReference>
<dbReference type="GO" id="GO:0006366">
    <property type="term" value="P:transcription by RNA polymerase II"/>
    <property type="evidence" value="ECO:0000315"/>
    <property type="project" value="MGI"/>
</dbReference>
<dbReference type="CDD" id="cd09327">
    <property type="entry name" value="LIM1_abLIM"/>
    <property type="match status" value="1"/>
</dbReference>
<dbReference type="CDD" id="cd09328">
    <property type="entry name" value="LIM2_abLIM"/>
    <property type="match status" value="1"/>
</dbReference>
<dbReference type="CDD" id="cd09329">
    <property type="entry name" value="LIM3_abLIM"/>
    <property type="match status" value="1"/>
</dbReference>
<dbReference type="CDD" id="cd09330">
    <property type="entry name" value="LIM4_abLIM"/>
    <property type="match status" value="1"/>
</dbReference>
<dbReference type="FunFam" id="2.10.110.10:FF:000003">
    <property type="entry name" value="actin-binding LIM protein 1 isoform X1"/>
    <property type="match status" value="1"/>
</dbReference>
<dbReference type="FunFam" id="2.10.110.10:FF:000004">
    <property type="entry name" value="actin-binding LIM protein 1 isoform X1"/>
    <property type="match status" value="1"/>
</dbReference>
<dbReference type="FunFam" id="2.10.110.10:FF:000007">
    <property type="entry name" value="actin-binding LIM protein 1 isoform X1"/>
    <property type="match status" value="1"/>
</dbReference>
<dbReference type="FunFam" id="2.10.110.10:FF:000024">
    <property type="entry name" value="actin-binding LIM protein 1 isoform X1"/>
    <property type="match status" value="1"/>
</dbReference>
<dbReference type="FunFam" id="1.10.950.10:FF:000001">
    <property type="entry name" value="actin-binding LIM protein 1 isoform X2"/>
    <property type="match status" value="1"/>
</dbReference>
<dbReference type="Gene3D" id="2.10.110.10">
    <property type="entry name" value="Cysteine Rich Protein"/>
    <property type="match status" value="4"/>
</dbReference>
<dbReference type="Gene3D" id="1.10.950.10">
    <property type="entry name" value="Villin headpiece domain"/>
    <property type="match status" value="1"/>
</dbReference>
<dbReference type="InterPro" id="IPR032402">
    <property type="entry name" value="AbLIM_anchor"/>
</dbReference>
<dbReference type="InterPro" id="IPR051618">
    <property type="entry name" value="Actin-binding_LIM"/>
</dbReference>
<dbReference type="InterPro" id="IPR003128">
    <property type="entry name" value="Villin_headpiece"/>
</dbReference>
<dbReference type="InterPro" id="IPR036886">
    <property type="entry name" value="Villin_headpiece_dom_sf"/>
</dbReference>
<dbReference type="InterPro" id="IPR001781">
    <property type="entry name" value="Znf_LIM"/>
</dbReference>
<dbReference type="PANTHER" id="PTHR24213">
    <property type="entry name" value="ACTIN-BINDING LIM PROTEIN"/>
    <property type="match status" value="1"/>
</dbReference>
<dbReference type="PANTHER" id="PTHR24213:SF18">
    <property type="entry name" value="ACTIN-BINDING LIM PROTEIN 1"/>
    <property type="match status" value="1"/>
</dbReference>
<dbReference type="Pfam" id="PF16182">
    <property type="entry name" value="AbLIM_anchor"/>
    <property type="match status" value="1"/>
</dbReference>
<dbReference type="Pfam" id="PF00412">
    <property type="entry name" value="LIM"/>
    <property type="match status" value="4"/>
</dbReference>
<dbReference type="Pfam" id="PF02209">
    <property type="entry name" value="VHP"/>
    <property type="match status" value="1"/>
</dbReference>
<dbReference type="SMART" id="SM00132">
    <property type="entry name" value="LIM"/>
    <property type="match status" value="4"/>
</dbReference>
<dbReference type="SMART" id="SM00153">
    <property type="entry name" value="VHP"/>
    <property type="match status" value="1"/>
</dbReference>
<dbReference type="SUPFAM" id="SSF57716">
    <property type="entry name" value="Glucocorticoid receptor-like (DNA-binding domain)"/>
    <property type="match status" value="6"/>
</dbReference>
<dbReference type="SUPFAM" id="SSF47050">
    <property type="entry name" value="VHP, Villin headpiece domain"/>
    <property type="match status" value="1"/>
</dbReference>
<dbReference type="PROSITE" id="PS51089">
    <property type="entry name" value="HP"/>
    <property type="match status" value="1"/>
</dbReference>
<dbReference type="PROSITE" id="PS00478">
    <property type="entry name" value="LIM_DOMAIN_1"/>
    <property type="match status" value="4"/>
</dbReference>
<dbReference type="PROSITE" id="PS50023">
    <property type="entry name" value="LIM_DOMAIN_2"/>
    <property type="match status" value="4"/>
</dbReference>
<keyword id="KW-0009">Actin-binding</keyword>
<keyword id="KW-0025">Alternative splicing</keyword>
<keyword id="KW-0175">Coiled coil</keyword>
<keyword id="KW-0963">Cytoplasm</keyword>
<keyword id="KW-0206">Cytoskeleton</keyword>
<keyword id="KW-1017">Isopeptide bond</keyword>
<keyword id="KW-0440">LIM domain</keyword>
<keyword id="KW-0479">Metal-binding</keyword>
<keyword id="KW-0597">Phosphoprotein</keyword>
<keyword id="KW-1185">Reference proteome</keyword>
<keyword id="KW-0677">Repeat</keyword>
<keyword id="KW-0832">Ubl conjugation</keyword>
<keyword id="KW-0862">Zinc</keyword>
<accession>Q8K4G5</accession>
<accession>Q80U86</accession>
<accession>Q8BIR9</accession>
<accession>Q8K4G3</accession>
<accession>Q8K4G4</accession>
<protein>
    <recommendedName>
        <fullName>Actin-binding LIM protein 1</fullName>
        <shortName>abLIM-1</shortName>
    </recommendedName>
    <alternativeName>
        <fullName>Actin-binding LIM protein family member 1</fullName>
    </alternativeName>
</protein>
<feature type="chain" id="PRO_0000075698" description="Actin-binding LIM protein 1">
    <location>
        <begin position="1"/>
        <end position="861"/>
    </location>
</feature>
<feature type="domain" description="LIM zinc-binding 1" evidence="4">
    <location>
        <begin position="97"/>
        <end position="156"/>
    </location>
</feature>
<feature type="domain" description="LIM zinc-binding 2" evidence="4">
    <location>
        <begin position="156"/>
        <end position="216"/>
    </location>
</feature>
<feature type="domain" description="LIM zinc-binding 3" evidence="4">
    <location>
        <begin position="224"/>
        <end position="283"/>
    </location>
</feature>
<feature type="domain" description="LIM zinc-binding 4" evidence="4">
    <location>
        <begin position="283"/>
        <end position="343"/>
    </location>
</feature>
<feature type="domain" description="HP" evidence="5">
    <location>
        <begin position="793"/>
        <end position="861"/>
    </location>
</feature>
<feature type="region of interest" description="Disordered" evidence="6">
    <location>
        <begin position="374"/>
        <end position="414"/>
    </location>
</feature>
<feature type="region of interest" description="Disordered" evidence="6">
    <location>
        <begin position="459"/>
        <end position="590"/>
    </location>
</feature>
<feature type="region of interest" description="Disordered" evidence="6">
    <location>
        <begin position="634"/>
        <end position="682"/>
    </location>
</feature>
<feature type="region of interest" description="Disordered" evidence="6">
    <location>
        <begin position="713"/>
        <end position="748"/>
    </location>
</feature>
<feature type="coiled-coil region" evidence="3">
    <location>
        <begin position="673"/>
        <end position="723"/>
    </location>
</feature>
<feature type="compositionally biased region" description="Polar residues" evidence="6">
    <location>
        <begin position="381"/>
        <end position="400"/>
    </location>
</feature>
<feature type="compositionally biased region" description="Low complexity" evidence="6">
    <location>
        <begin position="404"/>
        <end position="413"/>
    </location>
</feature>
<feature type="compositionally biased region" description="Polar residues" evidence="6">
    <location>
        <begin position="467"/>
        <end position="478"/>
    </location>
</feature>
<feature type="compositionally biased region" description="Polar residues" evidence="6">
    <location>
        <begin position="493"/>
        <end position="518"/>
    </location>
</feature>
<feature type="compositionally biased region" description="Low complexity" evidence="6">
    <location>
        <begin position="536"/>
        <end position="546"/>
    </location>
</feature>
<feature type="compositionally biased region" description="Low complexity" evidence="6">
    <location>
        <begin position="724"/>
        <end position="738"/>
    </location>
</feature>
<feature type="modified residue" description="Phosphoserine" evidence="16">
    <location>
        <position position="216"/>
    </location>
</feature>
<feature type="modified residue" description="Phosphoserine" evidence="14 16">
    <location>
        <position position="411"/>
    </location>
</feature>
<feature type="modified residue" description="Phosphotyrosine" evidence="2">
    <location>
        <position position="417"/>
    </location>
</feature>
<feature type="modified residue" description="Phosphotyrosine" evidence="15">
    <location>
        <position position="440"/>
    </location>
</feature>
<feature type="modified residue" description="Phosphoserine" evidence="16">
    <location>
        <position position="466"/>
    </location>
</feature>
<feature type="modified residue" description="Phosphoserine" evidence="16">
    <location>
        <position position="470"/>
    </location>
</feature>
<feature type="modified residue" description="Phosphoserine" evidence="16">
    <location>
        <position position="475"/>
    </location>
</feature>
<feature type="modified residue" description="Phosphothreonine" evidence="2">
    <location>
        <position position="477"/>
    </location>
</feature>
<feature type="modified residue" description="Phosphoserine" evidence="16">
    <location>
        <position position="479"/>
    </location>
</feature>
<feature type="modified residue" description="Phosphotyrosine" evidence="2">
    <location>
        <position position="483"/>
    </location>
</feature>
<feature type="modified residue" description="Phosphoserine" evidence="2">
    <location>
        <position position="496"/>
    </location>
</feature>
<feature type="modified residue" description="Phosphoserine" evidence="14 16">
    <location>
        <position position="499"/>
    </location>
</feature>
<feature type="modified residue" description="Phosphoserine" evidence="16">
    <location>
        <position position="502"/>
    </location>
</feature>
<feature type="modified residue" description="Phosphoserine" evidence="16">
    <location>
        <position position="582"/>
    </location>
</feature>
<feature type="modified residue" description="Phosphoserine" evidence="16">
    <location>
        <position position="671"/>
    </location>
</feature>
<feature type="modified residue" description="Phosphoserine" evidence="2">
    <location>
        <position position="723"/>
    </location>
</feature>
<feature type="modified residue" description="Phosphoserine" evidence="2">
    <location>
        <position position="738"/>
    </location>
</feature>
<feature type="modified residue" description="Phosphoserine" evidence="16">
    <location>
        <position position="760"/>
    </location>
</feature>
<feature type="modified residue" description="Phosphoserine" evidence="2">
    <location>
        <position position="789"/>
    </location>
</feature>
<feature type="cross-link" description="Glycyl lysine isopeptide (Lys-Gly) (interchain with G-Cter in SUMO2)" evidence="2">
    <location>
        <position position="704"/>
    </location>
</feature>
<feature type="splice variant" id="VSP_012103" description="In isoform 3." evidence="12">
    <location>
        <begin position="1"/>
        <end position="316"/>
    </location>
</feature>
<feature type="splice variant" id="VSP_012104" description="In isoform 2 and isoform 4." evidence="10 12">
    <original>MPSLLGLKCLGKLCSSEIGKVPSPERASLRNSHRRLLIEDLSVPETPDPAHRRRGTVIHLVYLYSAGCGPPELRFSSYDPS</original>
    <variation>MVKEK</variation>
    <location>
        <begin position="1"/>
        <end position="81"/>
    </location>
</feature>
<feature type="splice variant" id="VSP_012105" description="In isoform 5." evidence="11">
    <location>
        <begin position="1"/>
        <end position="77"/>
    </location>
</feature>
<feature type="splice variant" id="VSP_012106" description="In isoform 5." evidence="11">
    <original>YDPS</original>
    <variation>MSTR</variation>
    <location>
        <begin position="78"/>
        <end position="81"/>
    </location>
</feature>
<feature type="splice variant" id="VSP_012107" description="In isoform 5." evidence="11">
    <original>DKHYHPSCARCSRCNQMFTEGEEMYLQGSTVWHPDCKQSTKTEEK</original>
    <variation>VTEASRTWSHIDLRWQGRSEELRAWRHSIQSLRHQSAREWFALSA</variation>
    <location>
        <begin position="301"/>
        <end position="345"/>
    </location>
</feature>
<feature type="splice variant" id="VSP_012109" description="In isoform 5." evidence="11">
    <location>
        <begin position="346"/>
        <end position="861"/>
    </location>
</feature>
<feature type="splice variant" id="VSP_012108" description="In isoform 2 and isoform 4." evidence="10 12">
    <location>
        <begin position="348"/>
        <end position="391"/>
    </location>
</feature>
<feature type="splice variant" id="VSP_012110" description="In isoform 2 and isoform 4." evidence="10 12">
    <location>
        <begin position="525"/>
        <end position="564"/>
    </location>
</feature>
<feature type="splice variant" id="VSP_012111" description="In isoform 4." evidence="10">
    <location>
        <begin position="616"/>
        <end position="662"/>
    </location>
</feature>
<organism>
    <name type="scientific">Mus musculus</name>
    <name type="common">Mouse</name>
    <dbReference type="NCBI Taxonomy" id="10090"/>
    <lineage>
        <taxon>Eukaryota</taxon>
        <taxon>Metazoa</taxon>
        <taxon>Chordata</taxon>
        <taxon>Craniata</taxon>
        <taxon>Vertebrata</taxon>
        <taxon>Euteleostomi</taxon>
        <taxon>Mammalia</taxon>
        <taxon>Eutheria</taxon>
        <taxon>Euarchontoglires</taxon>
        <taxon>Glires</taxon>
        <taxon>Rodentia</taxon>
        <taxon>Myomorpha</taxon>
        <taxon>Muroidea</taxon>
        <taxon>Muridae</taxon>
        <taxon>Murinae</taxon>
        <taxon>Mus</taxon>
        <taxon>Mus</taxon>
    </lineage>
</organism>
<reference key="1">
    <citation type="journal article" date="1997" name="J. Cell Biol.">
        <title>Molecular characterization of abLIM, a novel actin-binding and double zinc finger protein.</title>
        <authorList>
            <person name="Roof D.J."/>
            <person name="Hayes A."/>
            <person name="Adamian M."/>
            <person name="Chishti A.H."/>
            <person name="Li T."/>
        </authorList>
    </citation>
    <scope>NUCLEOTIDE SEQUENCE [MRNA] (ISOFORMS 1; 2 AND 3)</scope>
    <scope>TISSUE SPECIFICITY</scope>
    <scope>DEVELOPMENTAL STAGE</scope>
    <scope>SUBCELLULAR LOCATION</scope>
    <scope>PHOSPHORYLATION</scope>
    <source>
        <strain>C57BL/6J</strain>
    </source>
</reference>
<reference key="2">
    <citation type="journal article" date="2003" name="DNA Res.">
        <title>Prediction of the coding sequences of mouse homologues of KIAA gene: II. The complete nucleotide sequences of 400 mouse KIAA-homologous cDNAs identified by screening of terminal sequences of cDNA clones randomly sampled from size-fractionated libraries.</title>
        <authorList>
            <person name="Okazaki N."/>
            <person name="Kikuno R."/>
            <person name="Ohara R."/>
            <person name="Inamoto S."/>
            <person name="Aizawa H."/>
            <person name="Yuasa S."/>
            <person name="Nakajima D."/>
            <person name="Nagase T."/>
            <person name="Ohara O."/>
            <person name="Koga H."/>
        </authorList>
    </citation>
    <scope>NUCLEOTIDE SEQUENCE [LARGE SCALE MRNA] (ISOFORM 4)</scope>
    <source>
        <tissue>Brain</tissue>
    </source>
</reference>
<reference key="3">
    <citation type="journal article" date="2005" name="Science">
        <title>The transcriptional landscape of the mammalian genome.</title>
        <authorList>
            <person name="Carninci P."/>
            <person name="Kasukawa T."/>
            <person name="Katayama S."/>
            <person name="Gough J."/>
            <person name="Frith M.C."/>
            <person name="Maeda N."/>
            <person name="Oyama R."/>
            <person name="Ravasi T."/>
            <person name="Lenhard B."/>
            <person name="Wells C."/>
            <person name="Kodzius R."/>
            <person name="Shimokawa K."/>
            <person name="Bajic V.B."/>
            <person name="Brenner S.E."/>
            <person name="Batalov S."/>
            <person name="Forrest A.R."/>
            <person name="Zavolan M."/>
            <person name="Davis M.J."/>
            <person name="Wilming L.G."/>
            <person name="Aidinis V."/>
            <person name="Allen J.E."/>
            <person name="Ambesi-Impiombato A."/>
            <person name="Apweiler R."/>
            <person name="Aturaliya R.N."/>
            <person name="Bailey T.L."/>
            <person name="Bansal M."/>
            <person name="Baxter L."/>
            <person name="Beisel K.W."/>
            <person name="Bersano T."/>
            <person name="Bono H."/>
            <person name="Chalk A.M."/>
            <person name="Chiu K.P."/>
            <person name="Choudhary V."/>
            <person name="Christoffels A."/>
            <person name="Clutterbuck D.R."/>
            <person name="Crowe M.L."/>
            <person name="Dalla E."/>
            <person name="Dalrymple B.P."/>
            <person name="de Bono B."/>
            <person name="Della Gatta G."/>
            <person name="di Bernardo D."/>
            <person name="Down T."/>
            <person name="Engstrom P."/>
            <person name="Fagiolini M."/>
            <person name="Faulkner G."/>
            <person name="Fletcher C.F."/>
            <person name="Fukushima T."/>
            <person name="Furuno M."/>
            <person name="Futaki S."/>
            <person name="Gariboldi M."/>
            <person name="Georgii-Hemming P."/>
            <person name="Gingeras T.R."/>
            <person name="Gojobori T."/>
            <person name="Green R.E."/>
            <person name="Gustincich S."/>
            <person name="Harbers M."/>
            <person name="Hayashi Y."/>
            <person name="Hensch T.K."/>
            <person name="Hirokawa N."/>
            <person name="Hill D."/>
            <person name="Huminiecki L."/>
            <person name="Iacono M."/>
            <person name="Ikeo K."/>
            <person name="Iwama A."/>
            <person name="Ishikawa T."/>
            <person name="Jakt M."/>
            <person name="Kanapin A."/>
            <person name="Katoh M."/>
            <person name="Kawasawa Y."/>
            <person name="Kelso J."/>
            <person name="Kitamura H."/>
            <person name="Kitano H."/>
            <person name="Kollias G."/>
            <person name="Krishnan S.P."/>
            <person name="Kruger A."/>
            <person name="Kummerfeld S.K."/>
            <person name="Kurochkin I.V."/>
            <person name="Lareau L.F."/>
            <person name="Lazarevic D."/>
            <person name="Lipovich L."/>
            <person name="Liu J."/>
            <person name="Liuni S."/>
            <person name="McWilliam S."/>
            <person name="Madan Babu M."/>
            <person name="Madera M."/>
            <person name="Marchionni L."/>
            <person name="Matsuda H."/>
            <person name="Matsuzawa S."/>
            <person name="Miki H."/>
            <person name="Mignone F."/>
            <person name="Miyake S."/>
            <person name="Morris K."/>
            <person name="Mottagui-Tabar S."/>
            <person name="Mulder N."/>
            <person name="Nakano N."/>
            <person name="Nakauchi H."/>
            <person name="Ng P."/>
            <person name="Nilsson R."/>
            <person name="Nishiguchi S."/>
            <person name="Nishikawa S."/>
            <person name="Nori F."/>
            <person name="Ohara O."/>
            <person name="Okazaki Y."/>
            <person name="Orlando V."/>
            <person name="Pang K.C."/>
            <person name="Pavan W.J."/>
            <person name="Pavesi G."/>
            <person name="Pesole G."/>
            <person name="Petrovsky N."/>
            <person name="Piazza S."/>
            <person name="Reed J."/>
            <person name="Reid J.F."/>
            <person name="Ring B.Z."/>
            <person name="Ringwald M."/>
            <person name="Rost B."/>
            <person name="Ruan Y."/>
            <person name="Salzberg S.L."/>
            <person name="Sandelin A."/>
            <person name="Schneider C."/>
            <person name="Schoenbach C."/>
            <person name="Sekiguchi K."/>
            <person name="Semple C.A."/>
            <person name="Seno S."/>
            <person name="Sessa L."/>
            <person name="Sheng Y."/>
            <person name="Shibata Y."/>
            <person name="Shimada H."/>
            <person name="Shimada K."/>
            <person name="Silva D."/>
            <person name="Sinclair B."/>
            <person name="Sperling S."/>
            <person name="Stupka E."/>
            <person name="Sugiura K."/>
            <person name="Sultana R."/>
            <person name="Takenaka Y."/>
            <person name="Taki K."/>
            <person name="Tammoja K."/>
            <person name="Tan S.L."/>
            <person name="Tang S."/>
            <person name="Taylor M.S."/>
            <person name="Tegner J."/>
            <person name="Teichmann S.A."/>
            <person name="Ueda H.R."/>
            <person name="van Nimwegen E."/>
            <person name="Verardo R."/>
            <person name="Wei C.L."/>
            <person name="Yagi K."/>
            <person name="Yamanishi H."/>
            <person name="Zabarovsky E."/>
            <person name="Zhu S."/>
            <person name="Zimmer A."/>
            <person name="Hide W."/>
            <person name="Bult C."/>
            <person name="Grimmond S.M."/>
            <person name="Teasdale R.D."/>
            <person name="Liu E.T."/>
            <person name="Brusic V."/>
            <person name="Quackenbush J."/>
            <person name="Wahlestedt C."/>
            <person name="Mattick J.S."/>
            <person name="Hume D.A."/>
            <person name="Kai C."/>
            <person name="Sasaki D."/>
            <person name="Tomaru Y."/>
            <person name="Fukuda S."/>
            <person name="Kanamori-Katayama M."/>
            <person name="Suzuki M."/>
            <person name="Aoki J."/>
            <person name="Arakawa T."/>
            <person name="Iida J."/>
            <person name="Imamura K."/>
            <person name="Itoh M."/>
            <person name="Kato T."/>
            <person name="Kawaji H."/>
            <person name="Kawagashira N."/>
            <person name="Kawashima T."/>
            <person name="Kojima M."/>
            <person name="Kondo S."/>
            <person name="Konno H."/>
            <person name="Nakano K."/>
            <person name="Ninomiya N."/>
            <person name="Nishio T."/>
            <person name="Okada M."/>
            <person name="Plessy C."/>
            <person name="Shibata K."/>
            <person name="Shiraki T."/>
            <person name="Suzuki S."/>
            <person name="Tagami M."/>
            <person name="Waki K."/>
            <person name="Watahiki A."/>
            <person name="Okamura-Oho Y."/>
            <person name="Suzuki H."/>
            <person name="Kawai J."/>
            <person name="Hayashizaki Y."/>
        </authorList>
    </citation>
    <scope>NUCLEOTIDE SEQUENCE [LARGE SCALE MRNA] (ISOFORM 5)</scope>
    <source>
        <strain>C57BL/6J</strain>
        <tissue>Head</tissue>
    </source>
</reference>
<reference key="4">
    <citation type="journal article" date="2000" name="Neuron">
        <title>A POU domain transcription factor-dependent program regulates axon pathfinding in the vertebrate visual system.</title>
        <authorList>
            <person name="Erkman L."/>
            <person name="Yates P.A."/>
            <person name="McLaughlin T."/>
            <person name="McEvilly R.J."/>
            <person name="Whisenhunt T."/>
            <person name="O'Connell S.M."/>
            <person name="Krones A.I."/>
            <person name="Kirby M.A."/>
            <person name="Rapaport D.H."/>
            <person name="Bermingham J.R. Jr."/>
            <person name="O'Leary D.D.M."/>
            <person name="Rosenfeld M.G."/>
        </authorList>
    </citation>
    <scope>FUNCTION</scope>
    <scope>TISSUE SPECIFICITY</scope>
</reference>
<reference key="5">
    <citation type="journal article" date="2003" name="Neuroscience">
        <title>Normal retinal development and retinofugal projections in mice lacking the retina-specific variant of actin-binding LIM domain protein.</title>
        <authorList>
            <person name="Lu C."/>
            <person name="Huang X."/>
            <person name="Ma H.F."/>
            <person name="Gooley J.J."/>
            <person name="Aparacio J."/>
            <person name="Roof D.J."/>
            <person name="Chen C."/>
            <person name="Chen D.F."/>
            <person name="Li T."/>
        </authorList>
    </citation>
    <scope>FUNCTION</scope>
    <scope>DEVELOPMENTAL STAGE</scope>
    <scope>TISSUE SPECIFICITY</scope>
    <scope>ALTERNATIVE SPLICING (ISOFORMS 1; 2 AND 3)</scope>
    <source>
        <strain>C57BL/6J</strain>
    </source>
</reference>
<reference key="6">
    <citation type="journal article" date="2004" name="Mol. Cell. Proteomics">
        <title>Phosphoproteomic analysis of the developing mouse brain.</title>
        <authorList>
            <person name="Ballif B.A."/>
            <person name="Villen J."/>
            <person name="Beausoleil S.A."/>
            <person name="Schwartz D."/>
            <person name="Gygi S.P."/>
        </authorList>
    </citation>
    <scope>IDENTIFICATION BY MASS SPECTROMETRY [LARGE SCALE ANALYSIS]</scope>
    <source>
        <tissue>Embryonic brain</tissue>
    </source>
</reference>
<reference key="7">
    <citation type="journal article" date="2006" name="Mol. Cell. Proteomics">
        <title>Comprehensive identification of phosphorylation sites in postsynaptic density preparations.</title>
        <authorList>
            <person name="Trinidad J.C."/>
            <person name="Specht C.G."/>
            <person name="Thalhammer A."/>
            <person name="Schoepfer R."/>
            <person name="Burlingame A.L."/>
        </authorList>
    </citation>
    <scope>IDENTIFICATION BY MASS SPECTROMETRY [LARGE SCALE ANALYSIS]</scope>
    <source>
        <tissue>Brain</tissue>
    </source>
</reference>
<reference key="8">
    <citation type="journal article" date="2007" name="Proc. Natl. Acad. Sci. U.S.A.">
        <title>Large-scale phosphorylation analysis of mouse liver.</title>
        <authorList>
            <person name="Villen J."/>
            <person name="Beausoleil S.A."/>
            <person name="Gerber S.A."/>
            <person name="Gygi S.P."/>
        </authorList>
    </citation>
    <scope>PHOSPHORYLATION [LARGE SCALE ANALYSIS] AT SER-411 AND SER-499</scope>
    <scope>IDENTIFICATION BY MASS SPECTROMETRY [LARGE SCALE ANALYSIS]</scope>
    <source>
        <tissue>Liver</tissue>
    </source>
</reference>
<reference key="9">
    <citation type="journal article" date="2008" name="J. Proteome Res.">
        <title>Large-scale identification and evolution indexing of tyrosine phosphorylation sites from murine brain.</title>
        <authorList>
            <person name="Ballif B.A."/>
            <person name="Carey G.R."/>
            <person name="Sunyaev S.R."/>
            <person name="Gygi S.P."/>
        </authorList>
    </citation>
    <scope>PHOSPHORYLATION [LARGE SCALE ANALYSIS] AT TYR-440</scope>
    <scope>IDENTIFICATION BY MASS SPECTROMETRY [LARGE SCALE ANALYSIS]</scope>
    <source>
        <tissue>Brain</tissue>
    </source>
</reference>
<reference key="10">
    <citation type="journal article" date="2008" name="J. Proteome Res.">
        <title>Specific phosphopeptide enrichment with immobilized titanium ion affinity chromatography adsorbent for phosphoproteome analysis.</title>
        <authorList>
            <person name="Zhou H."/>
            <person name="Ye M."/>
            <person name="Dong J."/>
            <person name="Han G."/>
            <person name="Jiang X."/>
            <person name="Wu R."/>
            <person name="Zou H."/>
        </authorList>
    </citation>
    <scope>IDENTIFICATION BY MASS SPECTROMETRY [LARGE SCALE ANALYSIS]</scope>
    <source>
        <tissue>Liver</tissue>
    </source>
</reference>
<reference key="11">
    <citation type="journal article" date="2010" name="Cell">
        <title>A tissue-specific atlas of mouse protein phosphorylation and expression.</title>
        <authorList>
            <person name="Huttlin E.L."/>
            <person name="Jedrychowski M.P."/>
            <person name="Elias J.E."/>
            <person name="Goswami T."/>
            <person name="Rad R."/>
            <person name="Beausoleil S.A."/>
            <person name="Villen J."/>
            <person name="Haas W."/>
            <person name="Sowa M.E."/>
            <person name="Gygi S.P."/>
        </authorList>
    </citation>
    <scope>PHOSPHORYLATION [LARGE SCALE ANALYSIS] AT SER-216; SER-411; SER-466; SER-470; SER-475; SER-479; SER-499; SER-502; SER-582; SER-671 AND SER-760</scope>
    <scope>IDENTIFICATION BY MASS SPECTROMETRY [LARGE SCALE ANALYSIS]</scope>
    <source>
        <tissue>Brain</tissue>
        <tissue>Brown adipose tissue</tissue>
        <tissue>Heart</tissue>
        <tissue>Kidney</tissue>
        <tissue>Liver</tissue>
        <tissue>Lung</tissue>
        <tissue>Pancreas</tissue>
        <tissue>Spleen</tissue>
        <tissue>Testis</tissue>
    </source>
</reference>
<sequence>MPSLLGLKCLGKLCSSEIGKVPSPERASLRNSHRRLLIEDLSVPETPDPAHRRRGTVIHLVYLYSAGCGPPELRFSSYDPSVAHPQDPHHSSEKPVIHCHKCGEPCKGEVLRVQTKHFHIKCFTCKVCGCDLAQGGFFIKNGDYLCTLDYQRMYGTRCHGCGEFVEGEVVTALGKTYHPNCFACTICKRPFPPGDRVTFNGRDCLCQLCAQPMSSSPKEASCSSNCAGCGRDIKNGQALLALDKQWHLGCFKCKSCGKVLTGEYISKDGSPYCEKDYQGLFGVKCEACHQFITGKVLEAGDKHYHPSCARCSRCNQMFTEGEEMYLQGSTVWHPDCKQSTKTEEKLRPPNIPRSSSDFFYPKSLIRRTGRSPALQLLSPPCLTNSNKNPRQPTRTSSESIYSRPGSSIPGSPGHTIYAKVDNEILDYKDLAAIPKVKAIYDIERPDLITYEPFYTSGYEDKQERQSLGESPRTLSPTPSAEGYQDVRDRMIHRSTSQGSINSPVYSRHSYTPTTSRSPQHFHRPELLSPGVHRWSPLRTSSFSSTHSDSRPNPPFRHHFLPHVKGNEPSSGRNSPLPYRPDSRPLTPTYAQAPKHFHVPDQGINIYRKPPIYKQHAALAAQSKASEDIIKFSKFPAAQAPDPNEIPKIETDHWPGPPSLAAVGTDPRRRSSGREEDEEELLRRRQLQEEQLMKLNSGLGQLILKEEMEKESRERASLASRYDSPLHSASHAPSSKTSSLPGYGKNGLHRPVSTDFAQYNSYGDISGGVRDYQTLPDGHMPAVRMDRGVSMPNMLEPKIFPYEMLMVTNRGRNKILRDVDRTRLERHLAPEVFWEIFGMSIQEFDKLPLWRRNDMKKKAKLF</sequence>
<name>ABLM1_MOUSE</name>